<accession>B1PK17</accession>
<protein>
    <recommendedName>
        <fullName evidence="1">Aspartoacylase</fullName>
        <ecNumber evidence="1">3.5.1.15</ecNumber>
    </recommendedName>
    <alternativeName>
        <fullName>Aminoacylase-2</fullName>
        <shortName>ACY-2</shortName>
    </alternativeName>
</protein>
<reference key="1">
    <citation type="submission" date="2008-02" db="EMBL/GenBank/DDBJ databases">
        <authorList>
            <person name="Shu X."/>
            <person name="Liu Y.G."/>
        </authorList>
    </citation>
    <scope>NUCLEOTIDE SEQUENCE [LARGE SCALE MRNA]</scope>
</reference>
<gene>
    <name type="primary">ASPA</name>
</gene>
<evidence type="ECO:0000250" key="1">
    <source>
        <dbReference type="UniProtKB" id="P45381"/>
    </source>
</evidence>
<evidence type="ECO:0000250" key="2">
    <source>
        <dbReference type="UniProtKB" id="Q9R1T5"/>
    </source>
</evidence>
<evidence type="ECO:0000305" key="3"/>
<organism>
    <name type="scientific">Sus scrofa</name>
    <name type="common">Pig</name>
    <dbReference type="NCBI Taxonomy" id="9823"/>
    <lineage>
        <taxon>Eukaryota</taxon>
        <taxon>Metazoa</taxon>
        <taxon>Chordata</taxon>
        <taxon>Craniata</taxon>
        <taxon>Vertebrata</taxon>
        <taxon>Euteleostomi</taxon>
        <taxon>Mammalia</taxon>
        <taxon>Eutheria</taxon>
        <taxon>Laurasiatheria</taxon>
        <taxon>Artiodactyla</taxon>
        <taxon>Suina</taxon>
        <taxon>Suidae</taxon>
        <taxon>Sus</taxon>
    </lineage>
</organism>
<comment type="function">
    <text evidence="1">Catalyzes the deacetylation of N-acetylaspartic acid (NAA) to produce acetate and L-aspartate. NAA occurs in high concentration in brain and its hydrolysis NAA plays a significant part in the maintenance of intact white matter. In other tissues it acts as a scavenger of NAA from body fluids.</text>
</comment>
<comment type="catalytic activity">
    <reaction evidence="1">
        <text>an N-acyl-L-aspartate + H2O = a carboxylate + L-aspartate</text>
        <dbReference type="Rhea" id="RHEA:10872"/>
        <dbReference type="ChEBI" id="CHEBI:15377"/>
        <dbReference type="ChEBI" id="CHEBI:29067"/>
        <dbReference type="ChEBI" id="CHEBI:29991"/>
        <dbReference type="ChEBI" id="CHEBI:58497"/>
        <dbReference type="EC" id="3.5.1.15"/>
    </reaction>
    <physiologicalReaction direction="left-to-right" evidence="1">
        <dbReference type="Rhea" id="RHEA:10873"/>
    </physiologicalReaction>
</comment>
<comment type="catalytic activity">
    <reaction evidence="1">
        <text>N-acetyl-L-aspartate + H2O = L-aspartate + acetate</text>
        <dbReference type="Rhea" id="RHEA:59408"/>
        <dbReference type="ChEBI" id="CHEBI:15377"/>
        <dbReference type="ChEBI" id="CHEBI:16953"/>
        <dbReference type="ChEBI" id="CHEBI:29991"/>
        <dbReference type="ChEBI" id="CHEBI:30089"/>
    </reaction>
    <physiologicalReaction direction="left-to-right" evidence="1">
        <dbReference type="Rhea" id="RHEA:59409"/>
    </physiologicalReaction>
</comment>
<comment type="cofactor">
    <cofactor evidence="1">
        <name>Zn(2+)</name>
        <dbReference type="ChEBI" id="CHEBI:29105"/>
    </cofactor>
    <text evidence="1">Binds 1 zinc ion per subunit.</text>
</comment>
<comment type="subunit">
    <text evidence="1">Homodimer.</text>
</comment>
<comment type="subcellular location">
    <subcellularLocation>
        <location evidence="2">Cytoplasm</location>
    </subcellularLocation>
    <subcellularLocation>
        <location evidence="2">Nucleus</location>
    </subcellularLocation>
</comment>
<comment type="similarity">
    <text evidence="3">Belongs to the AspA/AstE family. Aspartoacylase subfamily.</text>
</comment>
<keyword id="KW-0963">Cytoplasm</keyword>
<keyword id="KW-0378">Hydrolase</keyword>
<keyword id="KW-0479">Metal-binding</keyword>
<keyword id="KW-0539">Nucleus</keyword>
<keyword id="KW-1185">Reference proteome</keyword>
<keyword id="KW-0862">Zinc</keyword>
<dbReference type="EC" id="3.5.1.15" evidence="1"/>
<dbReference type="EMBL" id="EU442574">
    <property type="protein sequence ID" value="ACA43014.1"/>
    <property type="molecule type" value="mRNA"/>
</dbReference>
<dbReference type="RefSeq" id="NP_001116549.1">
    <property type="nucleotide sequence ID" value="NM_001123077.1"/>
</dbReference>
<dbReference type="SMR" id="B1PK17"/>
<dbReference type="FunCoup" id="B1PK17">
    <property type="interactions" value="197"/>
</dbReference>
<dbReference type="STRING" id="9823.ENSSSCP00000041582"/>
<dbReference type="PaxDb" id="9823-ENSSSCP00000018920"/>
<dbReference type="PeptideAtlas" id="B1PK17"/>
<dbReference type="Ensembl" id="ENSSSCT00115026322">
    <property type="protein sequence ID" value="ENSSSCP00115024940"/>
    <property type="gene ID" value="ENSSSCG00115015138"/>
</dbReference>
<dbReference type="GeneID" id="100142661"/>
<dbReference type="KEGG" id="ssc:100142661"/>
<dbReference type="CTD" id="443"/>
<dbReference type="eggNOG" id="ENOG502QRAK">
    <property type="taxonomic scope" value="Eukaryota"/>
</dbReference>
<dbReference type="HOGENOM" id="CLU_083292_0_0_1"/>
<dbReference type="InParanoid" id="B1PK17"/>
<dbReference type="OrthoDB" id="8300214at2759"/>
<dbReference type="TreeFam" id="TF328708"/>
<dbReference type="Proteomes" id="UP000008227">
    <property type="component" value="Unplaced"/>
</dbReference>
<dbReference type="Proteomes" id="UP000314985">
    <property type="component" value="Unplaced"/>
</dbReference>
<dbReference type="Proteomes" id="UP000694570">
    <property type="component" value="Unplaced"/>
</dbReference>
<dbReference type="Proteomes" id="UP000694571">
    <property type="component" value="Unplaced"/>
</dbReference>
<dbReference type="Proteomes" id="UP000694720">
    <property type="component" value="Unplaced"/>
</dbReference>
<dbReference type="Proteomes" id="UP000694722">
    <property type="component" value="Unplaced"/>
</dbReference>
<dbReference type="Proteomes" id="UP000694723">
    <property type="component" value="Unplaced"/>
</dbReference>
<dbReference type="Proteomes" id="UP000694724">
    <property type="component" value="Unplaced"/>
</dbReference>
<dbReference type="Proteomes" id="UP000694725">
    <property type="component" value="Unplaced"/>
</dbReference>
<dbReference type="Proteomes" id="UP000694726">
    <property type="component" value="Unplaced"/>
</dbReference>
<dbReference type="Proteomes" id="UP000694727">
    <property type="component" value="Unplaced"/>
</dbReference>
<dbReference type="Proteomes" id="UP000694728">
    <property type="component" value="Unplaced"/>
</dbReference>
<dbReference type="GO" id="GO:0005829">
    <property type="term" value="C:cytosol"/>
    <property type="evidence" value="ECO:0000318"/>
    <property type="project" value="GO_Central"/>
</dbReference>
<dbReference type="GO" id="GO:0005634">
    <property type="term" value="C:nucleus"/>
    <property type="evidence" value="ECO:0007669"/>
    <property type="project" value="UniProtKB-SubCell"/>
</dbReference>
<dbReference type="GO" id="GO:0019807">
    <property type="term" value="F:aspartoacylase activity"/>
    <property type="evidence" value="ECO:0000250"/>
    <property type="project" value="UniProtKB"/>
</dbReference>
<dbReference type="GO" id="GO:0016811">
    <property type="term" value="F:hydrolase activity, acting on carbon-nitrogen (but not peptide) bonds, in linear amides"/>
    <property type="evidence" value="ECO:0000318"/>
    <property type="project" value="GO_Central"/>
</dbReference>
<dbReference type="GO" id="GO:0016788">
    <property type="term" value="F:hydrolase activity, acting on ester bonds"/>
    <property type="evidence" value="ECO:0007669"/>
    <property type="project" value="InterPro"/>
</dbReference>
<dbReference type="GO" id="GO:0046872">
    <property type="term" value="F:metal ion binding"/>
    <property type="evidence" value="ECO:0007669"/>
    <property type="project" value="UniProtKB-KW"/>
</dbReference>
<dbReference type="CDD" id="cd06909">
    <property type="entry name" value="M14_ASPA"/>
    <property type="match status" value="1"/>
</dbReference>
<dbReference type="FunFam" id="2.20.25.160:FF:000001">
    <property type="entry name" value="Aspartoacylase"/>
    <property type="match status" value="1"/>
</dbReference>
<dbReference type="FunFam" id="3.40.630.10:FF:000025">
    <property type="entry name" value="aspartoacylase"/>
    <property type="match status" value="1"/>
</dbReference>
<dbReference type="Gene3D" id="2.20.25.160">
    <property type="match status" value="1"/>
</dbReference>
<dbReference type="Gene3D" id="3.40.630.10">
    <property type="entry name" value="Zn peptidases"/>
    <property type="match status" value="1"/>
</dbReference>
<dbReference type="HAMAP" id="MF_00704">
    <property type="entry name" value="Aspartoacylase"/>
    <property type="match status" value="1"/>
</dbReference>
<dbReference type="InterPro" id="IPR050178">
    <property type="entry name" value="AspA/AstE_fam"/>
</dbReference>
<dbReference type="InterPro" id="IPR016708">
    <property type="entry name" value="Aspartoacylase"/>
</dbReference>
<dbReference type="InterPro" id="IPR055438">
    <property type="entry name" value="AstE_AspA_cat"/>
</dbReference>
<dbReference type="InterPro" id="IPR007036">
    <property type="entry name" value="Aste_AspA_hybrid_dom"/>
</dbReference>
<dbReference type="NCBIfam" id="NF002601">
    <property type="entry name" value="PRK02259.1"/>
    <property type="match status" value="1"/>
</dbReference>
<dbReference type="PANTHER" id="PTHR15162">
    <property type="entry name" value="ASPARTOACYLASE"/>
    <property type="match status" value="1"/>
</dbReference>
<dbReference type="PANTHER" id="PTHR15162:SF9">
    <property type="entry name" value="ASPARTOACYLASE"/>
    <property type="match status" value="1"/>
</dbReference>
<dbReference type="Pfam" id="PF24827">
    <property type="entry name" value="AstE_AspA_cat"/>
    <property type="match status" value="1"/>
</dbReference>
<dbReference type="Pfam" id="PF04952">
    <property type="entry name" value="AstE_AspA_hybrid"/>
    <property type="match status" value="1"/>
</dbReference>
<dbReference type="PIRSF" id="PIRSF018001">
    <property type="entry name" value="Aspartoacylase"/>
    <property type="match status" value="1"/>
</dbReference>
<dbReference type="SUPFAM" id="SSF53187">
    <property type="entry name" value="Zn-dependent exopeptidases"/>
    <property type="match status" value="1"/>
</dbReference>
<feature type="chain" id="PRO_0000363359" description="Aspartoacylase">
    <location>
        <begin position="1"/>
        <end position="313"/>
    </location>
</feature>
<feature type="active site" description="Proton donor/acceptor" evidence="1">
    <location>
        <position position="178"/>
    </location>
</feature>
<feature type="binding site" evidence="1">
    <location>
        <position position="21"/>
    </location>
    <ligand>
        <name>Zn(2+)</name>
        <dbReference type="ChEBI" id="CHEBI:29105"/>
    </ligand>
</feature>
<feature type="binding site" evidence="1">
    <location>
        <position position="24"/>
    </location>
    <ligand>
        <name>Zn(2+)</name>
        <dbReference type="ChEBI" id="CHEBI:29105"/>
    </ligand>
</feature>
<feature type="binding site" evidence="1">
    <location>
        <position position="63"/>
    </location>
    <ligand>
        <name>N-acetyl-L-aspartate</name>
        <dbReference type="ChEBI" id="CHEBI:16953"/>
    </ligand>
</feature>
<feature type="binding site" evidence="1">
    <location>
        <position position="70"/>
    </location>
    <ligand>
        <name>N-acetyl-L-aspartate</name>
        <dbReference type="ChEBI" id="CHEBI:16953"/>
    </ligand>
</feature>
<feature type="binding site" evidence="1">
    <location>
        <position position="71"/>
    </location>
    <ligand>
        <name>N-acetyl-L-aspartate</name>
        <dbReference type="ChEBI" id="CHEBI:16953"/>
    </ligand>
</feature>
<feature type="binding site" evidence="1">
    <location>
        <position position="116"/>
    </location>
    <ligand>
        <name>Zn(2+)</name>
        <dbReference type="ChEBI" id="CHEBI:29105"/>
    </ligand>
</feature>
<feature type="binding site" evidence="1">
    <location>
        <position position="164"/>
    </location>
    <ligand>
        <name>N-acetyl-L-aspartate</name>
        <dbReference type="ChEBI" id="CHEBI:16953"/>
    </ligand>
</feature>
<feature type="binding site" evidence="1">
    <location>
        <position position="168"/>
    </location>
    <ligand>
        <name>N-acetyl-L-aspartate</name>
        <dbReference type="ChEBI" id="CHEBI:16953"/>
    </ligand>
</feature>
<feature type="binding site" evidence="1">
    <location>
        <position position="288"/>
    </location>
    <ligand>
        <name>N-acetyl-L-aspartate</name>
        <dbReference type="ChEBI" id="CHEBI:16953"/>
    </ligand>
</feature>
<feature type="site" description="Transition state stabilizer" evidence="1">
    <location>
        <position position="63"/>
    </location>
</feature>
<proteinExistence type="evidence at transcript level"/>
<sequence>MTSCQVAEDPIKKVAIFGGTHGNELTGVFLVKHWLENNTEIQRTGLEVKPFITNPRAVEKCTRYIDCDLNRVFDPENLGKRMSEDLPYEVRRAQEISRLFGPKDSEDSYDIIFDLHNTTSNMGCTLILEDSRNDFLIQMFHYIKTSLAPLPCYVYLIEHPSLKYATTRSIAKYPVGIEVGPQPQGVLRADILDQMRKMIKHALDFIHNFNEGKEFPPCAIEVYKIMEKVDYPRNESGEIAAIIHPKLQDQDWKPLHPGDPVFLTLDGKTIPLGGDCTVYPVFVNEAAYYEKKEAFAKTTKLTLNAKGIHSSLH</sequence>
<name>ACY2_PIG</name>